<reference evidence="5 6" key="1">
    <citation type="journal article" date="2002" name="Peptides">
        <title>Antimicrobial peptides from skin secretions of Chinese red belly toad Bombina maxima.</title>
        <authorList>
            <person name="Lai R."/>
            <person name="Zheng Y.-T."/>
            <person name="Shen J.-H."/>
            <person name="Liu G.-J."/>
            <person name="Liu H."/>
            <person name="Lee W.-H."/>
            <person name="Tang S.-Z."/>
            <person name="Zhang Y."/>
        </authorList>
    </citation>
    <scope>NUCLEOTIDE SEQUENCE [MRNA]</scope>
    <scope>PROTEIN SEQUENCE OF 44-70 AND 124-143</scope>
    <scope>AMIDATION AT ASN-70 AND ILE-143</scope>
    <scope>FUNCTION OF MAXIMIN-4 AND MAXIMIN-H3</scope>
    <scope>MASS SPECTROMETRY</scope>
    <source>
        <tissue evidence="2">Skin</tissue>
        <tissue evidence="2">Skin secretion</tissue>
    </source>
</reference>
<reference key="2">
    <citation type="journal article" date="2005" name="Eur. J. Immunol.">
        <title>Variety of antimicrobial peptides in the Bombina maxima toad and evidence of their rapid diversification.</title>
        <authorList>
            <person name="Lee W.-H."/>
            <person name="Li Y."/>
            <person name="Lai R."/>
            <person name="Li S."/>
            <person name="Zhang Y."/>
            <person name="Wang W."/>
        </authorList>
    </citation>
    <scope>NUCLEOTIDE SEQUENCE [MRNA]</scope>
    <scope>AMIDATION AT ASN-70 AND ILE-143</scope>
    <source>
        <tissue evidence="3">Skin</tissue>
    </source>
</reference>
<reference evidence="5" key="3">
    <citation type="submission" date="2001-07" db="UniProtKB">
        <title>Isolation and structural characterisation of antimicrobial peptides from the venom of the Chinese large-webbed bell toad (Bombina maxima).</title>
        <authorList>
            <person name="Chen T.B."/>
            <person name="McClean S."/>
            <person name="Orr D.F."/>
            <person name="Bjourson A.J."/>
            <person name="Rao P.F."/>
            <person name="Shaw C."/>
        </authorList>
    </citation>
    <scope>PROTEIN SEQUENCE OF 44-70</scope>
    <scope>FUNCTION OF MAXIMIN-4</scope>
    <scope>SUBCELLULAR LOCATION</scope>
    <scope>TISSUE SPECIFICITY</scope>
    <source>
        <tissue evidence="4">Skin secretion</tissue>
    </source>
</reference>
<organism evidence="6">
    <name type="scientific">Bombina maxima</name>
    <name type="common">Giant fire-bellied toad</name>
    <name type="synonym">Chinese red belly toad</name>
    <dbReference type="NCBI Taxonomy" id="161274"/>
    <lineage>
        <taxon>Eukaryota</taxon>
        <taxon>Metazoa</taxon>
        <taxon>Chordata</taxon>
        <taxon>Craniata</taxon>
        <taxon>Vertebrata</taxon>
        <taxon>Euteleostomi</taxon>
        <taxon>Amphibia</taxon>
        <taxon>Batrachia</taxon>
        <taxon>Anura</taxon>
        <taxon>Bombinatoridae</taxon>
        <taxon>Bombina</taxon>
    </lineage>
</organism>
<sequence length="144" mass="15903">MNFKYIIAVSFFIASAYARSEEKDVQSLSQRDVLEEESLREIRGIGGVLLSAGKAALKGLAKVLAEKYANGKRTAEDHEVMKRLEAVMRDLDSLDHPEEASERETRGFNQEEIANLFTKKEKRILGPVLGLVGNALGGLIKKIG</sequence>
<evidence type="ECO:0000255" key="1"/>
<evidence type="ECO:0000269" key="2">
    <source>
    </source>
</evidence>
<evidence type="ECO:0000269" key="3">
    <source>
    </source>
</evidence>
<evidence type="ECO:0000269" key="4">
    <source ref="3"/>
</evidence>
<evidence type="ECO:0000305" key="5"/>
<evidence type="ECO:0000312" key="6">
    <source>
        <dbReference type="EMBL" id="AAK63257.1"/>
    </source>
</evidence>
<comment type="function">
    <text>Maximin-4 shows antibacterial activity against both Gram-positive and Gram-negative bacteria. It also shows antimicrobial activity against the fungus C.albicans, but not against A.flavus nor P.uticale. It has little hemolytic activity. It does not possess a significant cytotoxicity against tumor cell lines. It does not possess a significant anti-HIV activity.</text>
</comment>
<comment type="function">
    <text evidence="2 4">Maximin-H3 shows antibacterial activity against both Gram-positive and Gram-negative bacteria. It also shows antimicrobial activity against the fungus C.albicans. Shows strong hemolytic activity.</text>
</comment>
<comment type="subcellular location">
    <subcellularLocation>
        <location evidence="4">Secreted</location>
    </subcellularLocation>
</comment>
<comment type="tissue specificity">
    <text evidence="4">Expressed by the skin glands.</text>
</comment>
<comment type="mass spectrometry" mass="2612.0" method="FAB" evidence="2">
    <molecule>Maximin-4</molecule>
</comment>
<comment type="mass spectrometry" mass="1944.0" method="FAB" evidence="2">
    <molecule>Maximin-H3</molecule>
</comment>
<comment type="similarity">
    <text evidence="1">Belongs to the bombinin family.</text>
</comment>
<feature type="signal peptide" evidence="1">
    <location>
        <begin position="1"/>
        <end position="18"/>
    </location>
</feature>
<feature type="propeptide" id="PRO_0000003152" evidence="1 2 4">
    <location>
        <begin position="19"/>
        <end position="43"/>
    </location>
</feature>
<feature type="peptide" id="PRO_0000003153" description="Maximin-4" evidence="2 4">
    <location>
        <begin position="44"/>
        <end position="70"/>
    </location>
</feature>
<feature type="propeptide" id="PRO_0000003154" evidence="2 4">
    <location>
        <begin position="74"/>
        <end position="123"/>
    </location>
</feature>
<feature type="peptide" id="PRO_0000003155" description="Maximin-H3" evidence="2 4">
    <location>
        <begin position="124"/>
        <end position="143"/>
    </location>
</feature>
<feature type="modified residue" description="Asparagine amide" evidence="2 3">
    <location>
        <position position="70"/>
    </location>
</feature>
<feature type="modified residue" description="Isoleucine amide" evidence="2 3">
    <location>
        <position position="143"/>
    </location>
</feature>
<dbReference type="EMBL" id="AF378907">
    <property type="protein sequence ID" value="AAK63257.1"/>
    <property type="molecule type" value="mRNA"/>
</dbReference>
<dbReference type="EMBL" id="AY848997">
    <property type="protein sequence ID" value="AAX50218.1"/>
    <property type="molecule type" value="mRNA"/>
</dbReference>
<dbReference type="EMBL" id="AY848982">
    <property type="protein sequence ID" value="AAX50203.1"/>
    <property type="molecule type" value="mRNA"/>
</dbReference>
<dbReference type="SMR" id="P83083"/>
<dbReference type="GO" id="GO:0005576">
    <property type="term" value="C:extracellular region"/>
    <property type="evidence" value="ECO:0007669"/>
    <property type="project" value="UniProtKB-SubCell"/>
</dbReference>
<dbReference type="GO" id="GO:0042742">
    <property type="term" value="P:defense response to bacterium"/>
    <property type="evidence" value="ECO:0007669"/>
    <property type="project" value="UniProtKB-KW"/>
</dbReference>
<dbReference type="GO" id="GO:0050832">
    <property type="term" value="P:defense response to fungus"/>
    <property type="evidence" value="ECO:0007669"/>
    <property type="project" value="UniProtKB-KW"/>
</dbReference>
<dbReference type="GO" id="GO:0031640">
    <property type="term" value="P:killing of cells of another organism"/>
    <property type="evidence" value="ECO:0007669"/>
    <property type="project" value="UniProtKB-KW"/>
</dbReference>
<dbReference type="InterPro" id="IPR007962">
    <property type="entry name" value="Bombinin"/>
</dbReference>
<dbReference type="Pfam" id="PF05298">
    <property type="entry name" value="Bombinin"/>
    <property type="match status" value="1"/>
</dbReference>
<protein>
    <recommendedName>
        <fullName>Maximins 4/H3 type 1</fullName>
    </recommendedName>
    <component>
        <recommendedName>
            <fullName>Maximin-4</fullName>
        </recommendedName>
    </component>
    <component>
        <recommendedName>
            <fullName>Maximin-H3</fullName>
        </recommendedName>
    </component>
</protein>
<name>M4H31_BOMMX</name>
<proteinExistence type="evidence at protein level"/>
<keyword id="KW-0027">Amidation</keyword>
<keyword id="KW-0878">Amphibian defense peptide</keyword>
<keyword id="KW-0044">Antibiotic</keyword>
<keyword id="KW-0929">Antimicrobial</keyword>
<keyword id="KW-0165">Cleavage on pair of basic residues</keyword>
<keyword id="KW-0204">Cytolysis</keyword>
<keyword id="KW-0903">Direct protein sequencing</keyword>
<keyword id="KW-0295">Fungicide</keyword>
<keyword id="KW-0354">Hemolysis</keyword>
<keyword id="KW-0964">Secreted</keyword>
<keyword id="KW-0732">Signal</keyword>
<accession>P83083</accession>
<accession>Q58T63</accession>